<comment type="function">
    <text evidence="1">Synaptic vesicle transporter with apparent selectivity for neutral amino acids. The transport is sodium-coupled but chloride-independent, likely driven by the proton electrochemical gradient generated by vacuolar H(+)-ATPase in an overall electrogenic mechanism. May contribute to the synaptic uptake of neurotransmitter precursors in a process coupled in part to vesicle exocytosis.</text>
</comment>
<comment type="catalytic activity">
    <reaction evidence="1">
        <text>L-proline(in) + Na(+)(in) = L-proline(out) + Na(+)(out)</text>
        <dbReference type="Rhea" id="RHEA:28967"/>
        <dbReference type="ChEBI" id="CHEBI:29101"/>
        <dbReference type="ChEBI" id="CHEBI:60039"/>
    </reaction>
</comment>
<comment type="catalytic activity">
    <reaction evidence="1">
        <text>L-leucine(in) + Na(+)(in) = L-leucine(out) + Na(+)(out)</text>
        <dbReference type="Rhea" id="RHEA:29263"/>
        <dbReference type="ChEBI" id="CHEBI:29101"/>
        <dbReference type="ChEBI" id="CHEBI:57427"/>
    </reaction>
</comment>
<comment type="catalytic activity">
    <reaction evidence="1">
        <text>glycine(in) + Na(+)(in) = glycine(out) + Na(+)(out)</text>
        <dbReference type="Rhea" id="RHEA:68228"/>
        <dbReference type="ChEBI" id="CHEBI:29101"/>
        <dbReference type="ChEBI" id="CHEBI:57305"/>
    </reaction>
</comment>
<comment type="catalytic activity">
    <reaction evidence="1">
        <text>L-alanine(in) + Na(+)(in) = L-alanine(out) + Na(+)(out)</text>
        <dbReference type="Rhea" id="RHEA:29283"/>
        <dbReference type="ChEBI" id="CHEBI:29101"/>
        <dbReference type="ChEBI" id="CHEBI:57972"/>
    </reaction>
</comment>
<comment type="catalytic activity">
    <reaction evidence="1">
        <text>L-glutamine(in) + Na(+)(in) = L-glutamine(out) + Na(+)(out)</text>
        <dbReference type="Rhea" id="RHEA:68236"/>
        <dbReference type="ChEBI" id="CHEBI:29101"/>
        <dbReference type="ChEBI" id="CHEBI:58359"/>
    </reaction>
</comment>
<comment type="subcellular location">
    <subcellularLocation>
        <location evidence="1">Cytoplasmic vesicle</location>
        <location evidence="1">Secretory vesicle</location>
        <location evidence="1">Synaptic vesicle membrane</location>
        <topology evidence="1">Multi-pass membrane protein</topology>
    </subcellularLocation>
    <subcellularLocation>
        <location evidence="2">Postsynapse</location>
    </subcellularLocation>
    <subcellularLocation>
        <location evidence="2">Presynapse</location>
    </subcellularLocation>
    <text evidence="2">Localizes at synaptic junctions - at both pre- and post-synaptic sites - particularly in excitatory glutamatergic terminals.</text>
</comment>
<comment type="similarity">
    <text evidence="4">Belongs to the sodium:neurotransmitter symporter (SNF) (TC 2.A.22) family.</text>
</comment>
<feature type="chain" id="PRO_0000214802" description="Sodium-dependent neutral amino acid transporter SLC6A17">
    <location>
        <begin position="1" status="less than"/>
        <end position="225" status="greater than"/>
    </location>
</feature>
<feature type="transmembrane region" description="Helical; Name=1" evidence="3">
    <location>
        <begin position="1" status="less than"/>
        <end position="8"/>
    </location>
</feature>
<feature type="transmembrane region" description="Helical; Name=2" evidence="3">
    <location>
        <begin position="16"/>
        <end position="35"/>
    </location>
</feature>
<feature type="transmembrane region" description="Helical; Name=3" evidence="3">
    <location>
        <begin position="60"/>
        <end position="80"/>
    </location>
</feature>
<feature type="topological domain" description="Extracellular" evidence="3">
    <location>
        <begin position="81"/>
        <end position="143"/>
    </location>
</feature>
<feature type="transmembrane region" description="Helical; Name=4" evidence="3">
    <location>
        <begin position="144"/>
        <end position="162"/>
    </location>
</feature>
<feature type="transmembrane region" description="Helical; Name=5" evidence="3">
    <location>
        <begin position="171"/>
        <end position="188"/>
    </location>
</feature>
<feature type="transmembrane region" description="Helical; Name=6" evidence="3">
    <location>
        <begin position="224"/>
        <end position="225" status="greater than"/>
    </location>
</feature>
<feature type="glycosylation site" description="N-linked (GlcNAc...) asparagine" evidence="3">
    <location>
        <position position="105"/>
    </location>
</feature>
<feature type="non-terminal residue">
    <location>
        <position position="1"/>
    </location>
</feature>
<feature type="non-terminal residue">
    <location>
        <position position="225"/>
    </location>
</feature>
<protein>
    <recommendedName>
        <fullName>Sodium-dependent neutral amino acid transporter SLC6A17</fullName>
    </recommendedName>
    <alternativeName>
        <fullName>Sodium-dependent neurotransmitter transporter NTT4</fullName>
    </alternativeName>
    <alternativeName>
        <fullName>Solute carrier family 6 member 17</fullName>
    </alternativeName>
</protein>
<reference key="1">
    <citation type="submission" date="1995-01" db="EMBL/GenBank/DDBJ databases">
        <title>Sodium- and chloride-dependent neurotransmitter transporters in bovine retina: identification and localization by in situ hybridization histochemistry.</title>
        <authorList>
            <person name="Jones E.M.C."/>
        </authorList>
    </citation>
    <scope>NUCLEOTIDE SEQUENCE [MRNA]</scope>
    <source>
        <tissue>Retina</tissue>
    </source>
</reference>
<gene>
    <name evidence="1" type="primary">SLC6A17</name>
    <name evidence="1" type="synonym">NTT4</name>
</gene>
<dbReference type="EMBL" id="U19593">
    <property type="protein sequence ID" value="AAA61578.1"/>
    <property type="molecule type" value="mRNA"/>
</dbReference>
<dbReference type="SMR" id="Q28001"/>
<dbReference type="STRING" id="9913.ENSBTAP00000002571"/>
<dbReference type="GlyCosmos" id="Q28001">
    <property type="glycosylation" value="1 site, No reported glycans"/>
</dbReference>
<dbReference type="GlyGen" id="Q28001">
    <property type="glycosylation" value="1 site"/>
</dbReference>
<dbReference type="PaxDb" id="9913-ENSBTAP00000002571"/>
<dbReference type="eggNOG" id="KOG3659">
    <property type="taxonomic scope" value="Eukaryota"/>
</dbReference>
<dbReference type="InParanoid" id="Q28001"/>
<dbReference type="OrthoDB" id="6581954at2759"/>
<dbReference type="Proteomes" id="UP000009136">
    <property type="component" value="Unplaced"/>
</dbReference>
<dbReference type="GO" id="GO:0042995">
    <property type="term" value="C:cell projection"/>
    <property type="evidence" value="ECO:0007669"/>
    <property type="project" value="UniProtKB-KW"/>
</dbReference>
<dbReference type="GO" id="GO:0016020">
    <property type="term" value="C:membrane"/>
    <property type="evidence" value="ECO:0000318"/>
    <property type="project" value="GO_Central"/>
</dbReference>
<dbReference type="GO" id="GO:0098794">
    <property type="term" value="C:postsynapse"/>
    <property type="evidence" value="ECO:0007669"/>
    <property type="project" value="UniProtKB-SubCell"/>
</dbReference>
<dbReference type="GO" id="GO:0008021">
    <property type="term" value="C:synaptic vesicle"/>
    <property type="evidence" value="ECO:0000250"/>
    <property type="project" value="UniProtKB"/>
</dbReference>
<dbReference type="GO" id="GO:0030672">
    <property type="term" value="C:synaptic vesicle membrane"/>
    <property type="evidence" value="ECO:0007669"/>
    <property type="project" value="UniProtKB-SubCell"/>
</dbReference>
<dbReference type="GO" id="GO:0015293">
    <property type="term" value="F:symporter activity"/>
    <property type="evidence" value="ECO:0007669"/>
    <property type="project" value="UniProtKB-KW"/>
</dbReference>
<dbReference type="GO" id="GO:0032328">
    <property type="term" value="P:alanine transport"/>
    <property type="evidence" value="ECO:0000250"/>
    <property type="project" value="UniProtKB"/>
</dbReference>
<dbReference type="GO" id="GO:0015816">
    <property type="term" value="P:glycine transport"/>
    <property type="evidence" value="ECO:0000250"/>
    <property type="project" value="UniProtKB"/>
</dbReference>
<dbReference type="GO" id="GO:0015820">
    <property type="term" value="P:L-leucine transport"/>
    <property type="evidence" value="ECO:0000250"/>
    <property type="project" value="UniProtKB"/>
</dbReference>
<dbReference type="GO" id="GO:0006836">
    <property type="term" value="P:neurotransmitter transport"/>
    <property type="evidence" value="ECO:0007669"/>
    <property type="project" value="UniProtKB-KW"/>
</dbReference>
<dbReference type="GO" id="GO:0015804">
    <property type="term" value="P:neutral amino acid transport"/>
    <property type="evidence" value="ECO:0000250"/>
    <property type="project" value="UniProtKB"/>
</dbReference>
<dbReference type="GO" id="GO:0015824">
    <property type="term" value="P:proline transport"/>
    <property type="evidence" value="ECO:0000250"/>
    <property type="project" value="UniProtKB"/>
</dbReference>
<dbReference type="GO" id="GO:0035725">
    <property type="term" value="P:sodium ion transmembrane transport"/>
    <property type="evidence" value="ECO:0000318"/>
    <property type="project" value="GO_Central"/>
</dbReference>
<dbReference type="InterPro" id="IPR000175">
    <property type="entry name" value="Na/ntran_symport"/>
</dbReference>
<dbReference type="InterPro" id="IPR037272">
    <property type="entry name" value="SNS_sf"/>
</dbReference>
<dbReference type="PANTHER" id="PTHR11616:SF102">
    <property type="entry name" value="SODIUM-DEPENDENT NEUTRAL AMINO ACID TRANSPORTER SLC6A17"/>
    <property type="match status" value="1"/>
</dbReference>
<dbReference type="PANTHER" id="PTHR11616">
    <property type="entry name" value="SODIUM/CHLORIDE DEPENDENT TRANSPORTER"/>
    <property type="match status" value="1"/>
</dbReference>
<dbReference type="Pfam" id="PF00209">
    <property type="entry name" value="SNF"/>
    <property type="match status" value="1"/>
</dbReference>
<dbReference type="PRINTS" id="PR00176">
    <property type="entry name" value="NANEUSMPORT"/>
</dbReference>
<dbReference type="SUPFAM" id="SSF161070">
    <property type="entry name" value="SNF-like"/>
    <property type="match status" value="1"/>
</dbReference>
<dbReference type="PROSITE" id="PS00610">
    <property type="entry name" value="NA_NEUROTRAN_SYMP_1"/>
    <property type="match status" value="1"/>
</dbReference>
<dbReference type="PROSITE" id="PS00754">
    <property type="entry name" value="NA_NEUROTRAN_SYMP_2"/>
    <property type="match status" value="1"/>
</dbReference>
<dbReference type="PROSITE" id="PS50267">
    <property type="entry name" value="NA_NEUROTRAN_SYMP_3"/>
    <property type="match status" value="1"/>
</dbReference>
<proteinExistence type="evidence at transcript level"/>
<organism>
    <name type="scientific">Bos taurus</name>
    <name type="common">Bovine</name>
    <dbReference type="NCBI Taxonomy" id="9913"/>
    <lineage>
        <taxon>Eukaryota</taxon>
        <taxon>Metazoa</taxon>
        <taxon>Chordata</taxon>
        <taxon>Craniata</taxon>
        <taxon>Vertebrata</taxon>
        <taxon>Euteleostomi</taxon>
        <taxon>Mammalia</taxon>
        <taxon>Eutheria</taxon>
        <taxon>Laurasiatheria</taxon>
        <taxon>Artiodactyla</taxon>
        <taxon>Ruminantia</taxon>
        <taxon>Pecora</taxon>
        <taxon>Bovidae</taxon>
        <taxon>Bovinae</taxon>
        <taxon>Bos</taxon>
    </lineage>
</organism>
<sequence>NVWRFPYLCQKNGGGAYLVPYLVLLIIIGIPLFFLELAVGQRIRRGSIGVWHYVCPRLGGIGFSSCIVCLFVGLYYNVIIGWSIFYFFKSFQYPLPWSECPVSRNGTVAVVEAECEKSSATTYFWYREALDISNSISESGGLNWKMTLCLLVAWRIVGMAVVKGIQSSGKVMYFSSLFPYVVLACFLVRGLLLRGAIDGILHMFTPKLDKMLDPQVWRDAATQIF</sequence>
<evidence type="ECO:0000250" key="1">
    <source>
        <dbReference type="UniProtKB" id="P31662"/>
    </source>
</evidence>
<evidence type="ECO:0000250" key="2">
    <source>
        <dbReference type="UniProtKB" id="Q8BJI1"/>
    </source>
</evidence>
<evidence type="ECO:0000255" key="3"/>
<evidence type="ECO:0000305" key="4"/>
<name>S6A17_BOVIN</name>
<keyword id="KW-0029">Amino-acid transport</keyword>
<keyword id="KW-0966">Cell projection</keyword>
<keyword id="KW-0968">Cytoplasmic vesicle</keyword>
<keyword id="KW-0325">Glycoprotein</keyword>
<keyword id="KW-0406">Ion transport</keyword>
<keyword id="KW-0472">Membrane</keyword>
<keyword id="KW-0532">Neurotransmitter transport</keyword>
<keyword id="KW-1185">Reference proteome</keyword>
<keyword id="KW-0915">Sodium</keyword>
<keyword id="KW-0739">Sodium transport</keyword>
<keyword id="KW-0769">Symport</keyword>
<keyword id="KW-0770">Synapse</keyword>
<keyword id="KW-0812">Transmembrane</keyword>
<keyword id="KW-1133">Transmembrane helix</keyword>
<keyword id="KW-0813">Transport</keyword>
<accession>Q28001</accession>